<protein>
    <recommendedName>
        <fullName evidence="1">Polyphosphate kinase</fullName>
        <ecNumber evidence="1">2.7.4.1</ecNumber>
    </recommendedName>
    <alternativeName>
        <fullName evidence="1">ATP-polyphosphate phosphotransferase</fullName>
    </alternativeName>
    <alternativeName>
        <fullName evidence="1">Polyphosphoric acid kinase</fullName>
    </alternativeName>
</protein>
<reference key="1">
    <citation type="journal article" date="2003" name="Nature">
        <title>Genome divergence in two Prochlorococcus ecotypes reflects oceanic niche differentiation.</title>
        <authorList>
            <person name="Rocap G."/>
            <person name="Larimer F.W."/>
            <person name="Lamerdin J.E."/>
            <person name="Malfatti S."/>
            <person name="Chain P."/>
            <person name="Ahlgren N.A."/>
            <person name="Arellano A."/>
            <person name="Coleman M."/>
            <person name="Hauser L."/>
            <person name="Hess W.R."/>
            <person name="Johnson Z.I."/>
            <person name="Land M.L."/>
            <person name="Lindell D."/>
            <person name="Post A.F."/>
            <person name="Regala W."/>
            <person name="Shah M."/>
            <person name="Shaw S.L."/>
            <person name="Steglich C."/>
            <person name="Sullivan M.B."/>
            <person name="Ting C.S."/>
            <person name="Tolonen A."/>
            <person name="Webb E.A."/>
            <person name="Zinser E.R."/>
            <person name="Chisholm S.W."/>
        </authorList>
    </citation>
    <scope>NUCLEOTIDE SEQUENCE [LARGE SCALE GENOMIC DNA]</scope>
    <source>
        <strain>MIT 9313</strain>
    </source>
</reference>
<sequence>MSNPAVASEHYINRELSWISFNERVLAQALDTRTPLLEQAKFSAIFSNNLDEFFMVRVASLKAQVEAGITKTSADGLTPLQQLLTIRDHLVPLIEQQQDHYRKHLKNQLVEHGVHLLDYEQLNPKERLWIDNYFQTAIFPVLTPLAVDQAHPFPFVSNLSLNIATLILDPETGQQQFARVKIPQKTIPRFVEIPPDLSGINPKPVHTAVPLEQVVAFNLKLLFPGMKIEEHYFFRVTRDADLELRDLEADDLMSAMEQGLHKRRMGGEVVRLEVTNEMPQRVVEMLIEGMAVEEKDLYRIEGLLGLDDLFGLMRLPLEQLKDQPHIGLTAKVLSRSQRRMLEDESIKEEEFKSIFSVIRRKDILLHHPYELFATSVEEFINQAADDPLVMGIKITLYRTSKDSPIIAALIRAAEHGKQVMALVELKARFDEGNNIQWARHLERSGVHVVYGVLGLKTHTKTILVVRKEKERLRSYVHIGTGNYNSKTSRLYTDLGLLSARPELSQDLVELFNYLTGFSKQQSFRRLLVAPVTLRKGMESLILREIEHAREGRGGHIRAKMNALVDPAIISLLYEASQVGVRIELIIRGMCCLYPGRKGFSENISVISIIGRFLEHSRIFWFANDNNPEVYIGSADLMPRNLDRRVEAITPIEEPEQKEHLERLLNLYLNDNREAWDMQSDGSFLQRQPNPNSEEHRAQQQLINLWQQGIPAA</sequence>
<keyword id="KW-0067">ATP-binding</keyword>
<keyword id="KW-0418">Kinase</keyword>
<keyword id="KW-0460">Magnesium</keyword>
<keyword id="KW-0479">Metal-binding</keyword>
<keyword id="KW-0547">Nucleotide-binding</keyword>
<keyword id="KW-0597">Phosphoprotein</keyword>
<keyword id="KW-1185">Reference proteome</keyword>
<keyword id="KW-0677">Repeat</keyword>
<keyword id="KW-0808">Transferase</keyword>
<proteinExistence type="inferred from homology"/>
<name>PPK1_PROMM</name>
<accession>Q7V3U5</accession>
<feature type="chain" id="PRO_1000079371" description="Polyphosphate kinase">
    <location>
        <begin position="1"/>
        <end position="712"/>
    </location>
</feature>
<feature type="active site" description="Phosphohistidine intermediate" evidence="1">
    <location>
        <position position="458"/>
    </location>
</feature>
<feature type="binding site" evidence="1">
    <location>
        <position position="49"/>
    </location>
    <ligand>
        <name>ATP</name>
        <dbReference type="ChEBI" id="CHEBI:30616"/>
    </ligand>
</feature>
<feature type="binding site" evidence="1">
    <location>
        <position position="398"/>
    </location>
    <ligand>
        <name>Mg(2+)</name>
        <dbReference type="ChEBI" id="CHEBI:18420"/>
    </ligand>
</feature>
<feature type="binding site" evidence="1">
    <location>
        <position position="428"/>
    </location>
    <ligand>
        <name>Mg(2+)</name>
        <dbReference type="ChEBI" id="CHEBI:18420"/>
    </ligand>
</feature>
<feature type="binding site" evidence="1">
    <location>
        <position position="491"/>
    </location>
    <ligand>
        <name>ATP</name>
        <dbReference type="ChEBI" id="CHEBI:30616"/>
    </ligand>
</feature>
<feature type="binding site" evidence="1">
    <location>
        <position position="587"/>
    </location>
    <ligand>
        <name>ATP</name>
        <dbReference type="ChEBI" id="CHEBI:30616"/>
    </ligand>
</feature>
<feature type="binding site" evidence="1">
    <location>
        <position position="615"/>
    </location>
    <ligand>
        <name>ATP</name>
        <dbReference type="ChEBI" id="CHEBI:30616"/>
    </ligand>
</feature>
<evidence type="ECO:0000255" key="1">
    <source>
        <dbReference type="HAMAP-Rule" id="MF_00347"/>
    </source>
</evidence>
<dbReference type="EC" id="2.7.4.1" evidence="1"/>
<dbReference type="EMBL" id="BX548175">
    <property type="protein sequence ID" value="CAE22419.1"/>
    <property type="molecule type" value="Genomic_DNA"/>
</dbReference>
<dbReference type="RefSeq" id="WP_011131609.1">
    <property type="nucleotide sequence ID" value="NC_005071.1"/>
</dbReference>
<dbReference type="SMR" id="Q7V3U5"/>
<dbReference type="KEGG" id="pmt:PMT_2245"/>
<dbReference type="eggNOG" id="COG0855">
    <property type="taxonomic scope" value="Bacteria"/>
</dbReference>
<dbReference type="HOGENOM" id="CLU_009678_5_0_3"/>
<dbReference type="OrthoDB" id="9761456at2"/>
<dbReference type="Proteomes" id="UP000001423">
    <property type="component" value="Chromosome"/>
</dbReference>
<dbReference type="GO" id="GO:0009358">
    <property type="term" value="C:polyphosphate kinase complex"/>
    <property type="evidence" value="ECO:0007669"/>
    <property type="project" value="InterPro"/>
</dbReference>
<dbReference type="GO" id="GO:0005524">
    <property type="term" value="F:ATP binding"/>
    <property type="evidence" value="ECO:0007669"/>
    <property type="project" value="UniProtKB-KW"/>
</dbReference>
<dbReference type="GO" id="GO:0046872">
    <property type="term" value="F:metal ion binding"/>
    <property type="evidence" value="ECO:0007669"/>
    <property type="project" value="UniProtKB-KW"/>
</dbReference>
<dbReference type="GO" id="GO:0008976">
    <property type="term" value="F:polyphosphate kinase activity"/>
    <property type="evidence" value="ECO:0007669"/>
    <property type="project" value="UniProtKB-UniRule"/>
</dbReference>
<dbReference type="GO" id="GO:0006799">
    <property type="term" value="P:polyphosphate biosynthetic process"/>
    <property type="evidence" value="ECO:0007669"/>
    <property type="project" value="UniProtKB-UniRule"/>
</dbReference>
<dbReference type="CDD" id="cd09165">
    <property type="entry name" value="PLDc_PaPPK1_C1_like"/>
    <property type="match status" value="1"/>
</dbReference>
<dbReference type="CDD" id="cd09168">
    <property type="entry name" value="PLDc_PaPPK1_C2_like"/>
    <property type="match status" value="1"/>
</dbReference>
<dbReference type="FunFam" id="3.30.870.10:FF:000001">
    <property type="entry name" value="Polyphosphate kinase"/>
    <property type="match status" value="1"/>
</dbReference>
<dbReference type="Gene3D" id="3.30.870.10">
    <property type="entry name" value="Endonuclease Chain A"/>
    <property type="match status" value="2"/>
</dbReference>
<dbReference type="Gene3D" id="3.30.1840.10">
    <property type="entry name" value="Polyphosphate kinase middle domain"/>
    <property type="match status" value="1"/>
</dbReference>
<dbReference type="Gene3D" id="1.20.58.310">
    <property type="entry name" value="Polyphosphate kinase N-terminal domain"/>
    <property type="match status" value="1"/>
</dbReference>
<dbReference type="HAMAP" id="MF_00347">
    <property type="entry name" value="Polyphosphate_kinase"/>
    <property type="match status" value="1"/>
</dbReference>
<dbReference type="InterPro" id="IPR003414">
    <property type="entry name" value="PP_kinase"/>
</dbReference>
<dbReference type="InterPro" id="IPR041108">
    <property type="entry name" value="PP_kinase_C_1"/>
</dbReference>
<dbReference type="InterPro" id="IPR024953">
    <property type="entry name" value="PP_kinase_middle"/>
</dbReference>
<dbReference type="InterPro" id="IPR036830">
    <property type="entry name" value="PP_kinase_middle_dom_sf"/>
</dbReference>
<dbReference type="InterPro" id="IPR025200">
    <property type="entry name" value="PPK_C_dom2"/>
</dbReference>
<dbReference type="InterPro" id="IPR025198">
    <property type="entry name" value="PPK_N_dom"/>
</dbReference>
<dbReference type="InterPro" id="IPR036832">
    <property type="entry name" value="PPK_N_dom_sf"/>
</dbReference>
<dbReference type="NCBIfam" id="TIGR03705">
    <property type="entry name" value="poly_P_kin"/>
    <property type="match status" value="1"/>
</dbReference>
<dbReference type="NCBIfam" id="NF003917">
    <property type="entry name" value="PRK05443.1-1"/>
    <property type="match status" value="1"/>
</dbReference>
<dbReference type="NCBIfam" id="NF003918">
    <property type="entry name" value="PRK05443.1-2"/>
    <property type="match status" value="1"/>
</dbReference>
<dbReference type="NCBIfam" id="NF003921">
    <property type="entry name" value="PRK05443.2-2"/>
    <property type="match status" value="1"/>
</dbReference>
<dbReference type="PANTHER" id="PTHR30218">
    <property type="entry name" value="POLYPHOSPHATE KINASE"/>
    <property type="match status" value="1"/>
</dbReference>
<dbReference type="PANTHER" id="PTHR30218:SF0">
    <property type="entry name" value="POLYPHOSPHATE KINASE"/>
    <property type="match status" value="1"/>
</dbReference>
<dbReference type="Pfam" id="PF02503">
    <property type="entry name" value="PP_kinase"/>
    <property type="match status" value="1"/>
</dbReference>
<dbReference type="Pfam" id="PF13090">
    <property type="entry name" value="PP_kinase_C"/>
    <property type="match status" value="1"/>
</dbReference>
<dbReference type="Pfam" id="PF17941">
    <property type="entry name" value="PP_kinase_C_1"/>
    <property type="match status" value="1"/>
</dbReference>
<dbReference type="Pfam" id="PF13089">
    <property type="entry name" value="PP_kinase_N"/>
    <property type="match status" value="1"/>
</dbReference>
<dbReference type="PIRSF" id="PIRSF015589">
    <property type="entry name" value="PP_kinase"/>
    <property type="match status" value="1"/>
</dbReference>
<dbReference type="SUPFAM" id="SSF56024">
    <property type="entry name" value="Phospholipase D/nuclease"/>
    <property type="match status" value="2"/>
</dbReference>
<dbReference type="SUPFAM" id="SSF143724">
    <property type="entry name" value="PHP14-like"/>
    <property type="match status" value="1"/>
</dbReference>
<dbReference type="SUPFAM" id="SSF140356">
    <property type="entry name" value="PPK N-terminal domain-like"/>
    <property type="match status" value="1"/>
</dbReference>
<gene>
    <name evidence="1" type="primary">ppk</name>
    <name type="ordered locus">PMT_2245</name>
</gene>
<organism>
    <name type="scientific">Prochlorococcus marinus (strain MIT 9313)</name>
    <dbReference type="NCBI Taxonomy" id="74547"/>
    <lineage>
        <taxon>Bacteria</taxon>
        <taxon>Bacillati</taxon>
        <taxon>Cyanobacteriota</taxon>
        <taxon>Cyanophyceae</taxon>
        <taxon>Synechococcales</taxon>
        <taxon>Prochlorococcaceae</taxon>
        <taxon>Prochlorococcus</taxon>
    </lineage>
</organism>
<comment type="function">
    <text evidence="1">Catalyzes the reversible transfer of the terminal phosphate of ATP to form a long-chain polyphosphate (polyP).</text>
</comment>
<comment type="catalytic activity">
    <reaction evidence="1">
        <text>[phosphate](n) + ATP = [phosphate](n+1) + ADP</text>
        <dbReference type="Rhea" id="RHEA:19573"/>
        <dbReference type="Rhea" id="RHEA-COMP:9859"/>
        <dbReference type="Rhea" id="RHEA-COMP:14280"/>
        <dbReference type="ChEBI" id="CHEBI:16838"/>
        <dbReference type="ChEBI" id="CHEBI:30616"/>
        <dbReference type="ChEBI" id="CHEBI:456216"/>
        <dbReference type="EC" id="2.7.4.1"/>
    </reaction>
</comment>
<comment type="cofactor">
    <cofactor evidence="1">
        <name>Mg(2+)</name>
        <dbReference type="ChEBI" id="CHEBI:18420"/>
    </cofactor>
</comment>
<comment type="PTM">
    <text evidence="1">An intermediate of this reaction is the autophosphorylated ppk in which a phosphate is covalently linked to a histidine residue through a N-P bond.</text>
</comment>
<comment type="similarity">
    <text evidence="1">Belongs to the polyphosphate kinase 1 (PPK1) family.</text>
</comment>